<dbReference type="EMBL" id="AE016795">
    <property type="protein sequence ID" value="AAO11002.1"/>
    <property type="molecule type" value="Genomic_DNA"/>
</dbReference>
<dbReference type="RefSeq" id="WP_011080497.1">
    <property type="nucleotide sequence ID" value="NC_004459.3"/>
</dbReference>
<dbReference type="SMR" id="Q8D9E8"/>
<dbReference type="KEGG" id="vvu:VV1_2655"/>
<dbReference type="HOGENOM" id="CLU_099839_1_0_6"/>
<dbReference type="Proteomes" id="UP000002275">
    <property type="component" value="Chromosome 1"/>
</dbReference>
<dbReference type="GO" id="GO:0005829">
    <property type="term" value="C:cytosol"/>
    <property type="evidence" value="ECO:0007669"/>
    <property type="project" value="TreeGrafter"/>
</dbReference>
<dbReference type="GO" id="GO:0000166">
    <property type="term" value="F:nucleotide binding"/>
    <property type="evidence" value="ECO:0007669"/>
    <property type="project" value="TreeGrafter"/>
</dbReference>
<dbReference type="CDD" id="cd11740">
    <property type="entry name" value="YajQ_like"/>
    <property type="match status" value="1"/>
</dbReference>
<dbReference type="FunFam" id="3.30.70.860:FF:000001">
    <property type="entry name" value="UPF0234 protein YajQ"/>
    <property type="match status" value="1"/>
</dbReference>
<dbReference type="FunFam" id="3.30.70.990:FF:000001">
    <property type="entry name" value="UPF0234 protein YajQ"/>
    <property type="match status" value="1"/>
</dbReference>
<dbReference type="Gene3D" id="3.30.70.860">
    <property type="match status" value="1"/>
</dbReference>
<dbReference type="Gene3D" id="3.30.70.990">
    <property type="entry name" value="YajQ-like, domain 2"/>
    <property type="match status" value="1"/>
</dbReference>
<dbReference type="HAMAP" id="MF_00632">
    <property type="entry name" value="YajQ"/>
    <property type="match status" value="1"/>
</dbReference>
<dbReference type="InterPro" id="IPR007551">
    <property type="entry name" value="DUF520"/>
</dbReference>
<dbReference type="InterPro" id="IPR035571">
    <property type="entry name" value="UPF0234-like_C"/>
</dbReference>
<dbReference type="InterPro" id="IPR035570">
    <property type="entry name" value="UPF0234_N"/>
</dbReference>
<dbReference type="InterPro" id="IPR036183">
    <property type="entry name" value="YajQ-like_sf"/>
</dbReference>
<dbReference type="NCBIfam" id="NF003819">
    <property type="entry name" value="PRK05412.1"/>
    <property type="match status" value="1"/>
</dbReference>
<dbReference type="PANTHER" id="PTHR30476">
    <property type="entry name" value="UPF0234 PROTEIN YAJQ"/>
    <property type="match status" value="1"/>
</dbReference>
<dbReference type="PANTHER" id="PTHR30476:SF0">
    <property type="entry name" value="UPF0234 PROTEIN YAJQ"/>
    <property type="match status" value="1"/>
</dbReference>
<dbReference type="Pfam" id="PF04461">
    <property type="entry name" value="DUF520"/>
    <property type="match status" value="1"/>
</dbReference>
<dbReference type="SUPFAM" id="SSF89963">
    <property type="entry name" value="YajQ-like"/>
    <property type="match status" value="2"/>
</dbReference>
<evidence type="ECO:0000255" key="1">
    <source>
        <dbReference type="HAMAP-Rule" id="MF_00632"/>
    </source>
</evidence>
<organism>
    <name type="scientific">Vibrio vulnificus (strain CMCP6)</name>
    <dbReference type="NCBI Taxonomy" id="216895"/>
    <lineage>
        <taxon>Bacteria</taxon>
        <taxon>Pseudomonadati</taxon>
        <taxon>Pseudomonadota</taxon>
        <taxon>Gammaproteobacteria</taxon>
        <taxon>Vibrionales</taxon>
        <taxon>Vibrionaceae</taxon>
        <taxon>Vibrio</taxon>
    </lineage>
</organism>
<gene>
    <name type="ordered locus">VV1_2655</name>
</gene>
<protein>
    <recommendedName>
        <fullName evidence="1">Nucleotide-binding protein VV1_2655</fullName>
    </recommendedName>
</protein>
<keyword id="KW-0547">Nucleotide-binding</keyword>
<feature type="chain" id="PRO_0000106206" description="Nucleotide-binding protein VV1_2655">
    <location>
        <begin position="1"/>
        <end position="160"/>
    </location>
</feature>
<sequence length="160" mass="18107">MPSFDIVSEIDTVELRNAVDNSNRELSTRFDFRNVQASFELVEQTVKVSAEGDFQLKQMRDILRGHLAKRGVDANSMDAKTAEQTGKNWHQDIVFLQGIETPMAKKIVKLIKDAKLKVQASIQGDKVRVTGKKRDDLQETIAAIRAAELGQPFQFNNFRD</sequence>
<comment type="function">
    <text evidence="1">Nucleotide-binding protein.</text>
</comment>
<comment type="similarity">
    <text evidence="1">Belongs to the YajQ family.</text>
</comment>
<reference key="1">
    <citation type="submission" date="2002-12" db="EMBL/GenBank/DDBJ databases">
        <title>Complete genome sequence of Vibrio vulnificus CMCP6.</title>
        <authorList>
            <person name="Rhee J.H."/>
            <person name="Kim S.Y."/>
            <person name="Chung S.S."/>
            <person name="Kim J.J."/>
            <person name="Moon Y.H."/>
            <person name="Jeong H."/>
            <person name="Choy H.E."/>
        </authorList>
    </citation>
    <scope>NUCLEOTIDE SEQUENCE [LARGE SCALE GENOMIC DNA]</scope>
    <source>
        <strain>CMCP6</strain>
    </source>
</reference>
<name>Y2655_VIBVU</name>
<accession>Q8D9E8</accession>
<proteinExistence type="inferred from homology"/>